<reference key="1">
    <citation type="journal article" date="1995" name="Nucleic Acids Res.">
        <title>Analysis of the Escherichia coli genome VI: DNA sequence of the region from 92.8 through 100 minutes.</title>
        <authorList>
            <person name="Burland V.D."/>
            <person name="Plunkett G. III"/>
            <person name="Sofia H.J."/>
            <person name="Daniels D.L."/>
            <person name="Blattner F.R."/>
        </authorList>
    </citation>
    <scope>NUCLEOTIDE SEQUENCE [LARGE SCALE GENOMIC DNA]</scope>
    <source>
        <strain>K12 / MG1655 / ATCC 47076</strain>
    </source>
</reference>
<reference key="2">
    <citation type="journal article" date="1997" name="Science">
        <title>The complete genome sequence of Escherichia coli K-12.</title>
        <authorList>
            <person name="Blattner F.R."/>
            <person name="Plunkett G. III"/>
            <person name="Bloch C.A."/>
            <person name="Perna N.T."/>
            <person name="Burland V."/>
            <person name="Riley M."/>
            <person name="Collado-Vides J."/>
            <person name="Glasner J.D."/>
            <person name="Rode C.K."/>
            <person name="Mayhew G.F."/>
            <person name="Gregor J."/>
            <person name="Davis N.W."/>
            <person name="Kirkpatrick H.A."/>
            <person name="Goeden M.A."/>
            <person name="Rose D.J."/>
            <person name="Mau B."/>
            <person name="Shao Y."/>
        </authorList>
    </citation>
    <scope>NUCLEOTIDE SEQUENCE [LARGE SCALE GENOMIC DNA]</scope>
    <source>
        <strain>K12 / MG1655 / ATCC 47076</strain>
    </source>
</reference>
<reference key="3">
    <citation type="journal article" date="2006" name="Mol. Syst. Biol.">
        <title>Highly accurate genome sequences of Escherichia coli K-12 strains MG1655 and W3110.</title>
        <authorList>
            <person name="Hayashi K."/>
            <person name="Morooka N."/>
            <person name="Yamamoto Y."/>
            <person name="Fujita K."/>
            <person name="Isono K."/>
            <person name="Choi S."/>
            <person name="Ohtsubo E."/>
            <person name="Baba T."/>
            <person name="Wanner B.L."/>
            <person name="Mori H."/>
            <person name="Horiuchi T."/>
        </authorList>
    </citation>
    <scope>NUCLEOTIDE SEQUENCE [LARGE SCALE GENOMIC DNA]</scope>
    <source>
        <strain>K12 / W3110 / ATCC 27325 / DSM 5911</strain>
    </source>
</reference>
<reference key="4">
    <citation type="unpublished observations" date="1995-07">
        <authorList>
            <person name="Berlyn M."/>
            <person name="Rudd K.E."/>
        </authorList>
    </citation>
    <scope>IDENTIFICATION AS CYCA</scope>
</reference>
<reference key="5">
    <citation type="journal article" date="1971" name="J. Bacteriol.">
        <title>Mechanism of D-cycloserine action: transport mutants for D-alanine, D-cycloserine, and glycine.</title>
        <authorList>
            <person name="Wargel R.J."/>
            <person name="Hadur C.A."/>
            <person name="Neuhaus F.C."/>
        </authorList>
    </citation>
    <scope>FUNCTION</scope>
</reference>
<reference key="6">
    <citation type="journal article" date="1973" name="J. Bacteriol.">
        <title>D-serine transport system in Escherichia coli K-12.</title>
        <authorList>
            <person name="Cosloy S.D."/>
        </authorList>
    </citation>
    <scope>FUNCTION</scope>
    <source>
        <strain>K12</strain>
    </source>
</reference>
<reference key="7">
    <citation type="journal article" date="1973" name="J. Bacteriol.">
        <title>Transport systems for alanine, serine, and glycine in Escherichia coli K-12.</title>
        <authorList>
            <person name="Robbins J.C."/>
            <person name="Oxender D.L."/>
        </authorList>
    </citation>
    <scope>FUNCTION</scope>
    <source>
        <strain>K12</strain>
    </source>
</reference>
<reference key="8">
    <citation type="journal article" date="2004" name="Appl. Microbiol. Biotechnol.">
        <title>Identification and characterization of the main beta-alanine uptake system in Escherichia coli.</title>
        <authorList>
            <person name="Schneider F."/>
            <person name="Kraemer R."/>
            <person name="Burkovski A."/>
        </authorList>
    </citation>
    <scope>FUNCTION</scope>
    <scope>CATALYTIC ACTIVITY</scope>
    <scope>ACTIVITY REGULATION</scope>
    <scope>BIOPHYSICOCHEMICAL PROPERTIES</scope>
</reference>
<reference key="9">
    <citation type="journal article" date="2005" name="Science">
        <title>Global topology analysis of the Escherichia coli inner membrane proteome.</title>
        <authorList>
            <person name="Daley D.O."/>
            <person name="Rapp M."/>
            <person name="Granseth E."/>
            <person name="Melen K."/>
            <person name="Drew D."/>
            <person name="von Heijne G."/>
        </authorList>
    </citation>
    <scope>SUBCELLULAR LOCATION</scope>
    <scope>TOPOLOGY [LARGE SCALE ANALYSIS]</scope>
    <source>
        <strain>K12 / MG1655 / ATCC 47076</strain>
    </source>
</reference>
<reference key="10">
    <citation type="journal article" date="2009" name="Microbiology">
        <title>Role of the sRNA GcvB in regulation of cycA in Escherichia coli.</title>
        <authorList>
            <person name="Pulvermacher S.C."/>
            <person name="Stauffer L.T."/>
            <person name="Stauffer G.V."/>
        </authorList>
    </citation>
    <scope>INDUCTION</scope>
</reference>
<reference key="11">
    <citation type="journal article" date="2013" name="J. Bacteriol.">
        <title>Characterization of Escherichia coli D-cycloserine transport and resistant mutants.</title>
        <authorList>
            <person name="Baisa G."/>
            <person name="Stabo N.J."/>
            <person name="Welch R.A."/>
        </authorList>
    </citation>
    <scope>FUNCTION</scope>
    <scope>DISRUPTION PHENOTYPE</scope>
    <source>
        <strain>K12 / BW25113</strain>
    </source>
</reference>
<gene>
    <name type="primary">cycA</name>
    <name evidence="10" type="synonym">dagA</name>
    <name type="synonym">ytfD</name>
    <name type="ordered locus">b4208</name>
    <name type="ordered locus">JW4166</name>
</gene>
<accession>P0AAE0</accession>
<accession>P39312</accession>
<accession>Q2M697</accession>
<protein>
    <recommendedName>
        <fullName evidence="11">D-serine/D-alanine/glycine transporter</fullName>
    </recommendedName>
    <alternativeName>
        <fullName evidence="9">Amino acid carrier CycA</fullName>
    </alternativeName>
</protein>
<organism>
    <name type="scientific">Escherichia coli (strain K12)</name>
    <dbReference type="NCBI Taxonomy" id="83333"/>
    <lineage>
        <taxon>Bacteria</taxon>
        <taxon>Pseudomonadati</taxon>
        <taxon>Pseudomonadota</taxon>
        <taxon>Gammaproteobacteria</taxon>
        <taxon>Enterobacterales</taxon>
        <taxon>Enterobacteriaceae</taxon>
        <taxon>Escherichia</taxon>
    </lineage>
</organism>
<comment type="function">
    <text evidence="2 5 6 7 8">Permease that is involved in the transport across the cytoplasmic membrane of D-alanine, D-serine, glycine and beta-alanine (PubMed:15221223, PubMed:23316042, PubMed:4574696, PubMed:4583203, PubMed:4926674). Also contributes to L-alanine uptake (PubMed:4574696, PubMed:4583203). In addition, in minimal media, transports the broad spectrum antibiotic D-cycloserine into the cell (PubMed:23316042, PubMed:4574696, PubMed:4926674). Transports D-cycloserine only in minimal media, and not in a complex medium, suggesting that CycA does not play a role in D-cycloserine transport when E.coli is grown in a complex or biologically relevant medium, probably due to competition from other CycA substrates present in the medium (PubMed:23316042).</text>
</comment>
<comment type="catalytic activity">
    <reaction evidence="12 13">
        <text>D-alanine(in) + H(+)(in) = D-alanine(out) + H(+)(out)</text>
        <dbReference type="Rhea" id="RHEA:28903"/>
        <dbReference type="ChEBI" id="CHEBI:15378"/>
        <dbReference type="ChEBI" id="CHEBI:57416"/>
    </reaction>
    <physiologicalReaction direction="right-to-left" evidence="12 13">
        <dbReference type="Rhea" id="RHEA:28905"/>
    </physiologicalReaction>
</comment>
<comment type="catalytic activity">
    <reaction evidence="13">
        <text>D-serine(out) + H(+)(out) = D-serine(in) + H(+)(in)</text>
        <dbReference type="Rhea" id="RHEA:70647"/>
        <dbReference type="ChEBI" id="CHEBI:15378"/>
        <dbReference type="ChEBI" id="CHEBI:35247"/>
    </reaction>
    <physiologicalReaction direction="left-to-right" evidence="13">
        <dbReference type="Rhea" id="RHEA:70648"/>
    </physiologicalReaction>
</comment>
<comment type="catalytic activity">
    <reaction evidence="12 13">
        <text>glycine(in) + H(+)(in) = glycine(out) + H(+)(out)</text>
        <dbReference type="Rhea" id="RHEA:28899"/>
        <dbReference type="ChEBI" id="CHEBI:15378"/>
        <dbReference type="ChEBI" id="CHEBI:57305"/>
    </reaction>
    <physiologicalReaction direction="right-to-left" evidence="12 13">
        <dbReference type="Rhea" id="RHEA:28901"/>
    </physiologicalReaction>
</comment>
<comment type="catalytic activity">
    <reaction evidence="2">
        <text>beta-alanine(in) + H(+)(in) = beta-alanine(out) + H(+)(out)</text>
        <dbReference type="Rhea" id="RHEA:29459"/>
        <dbReference type="ChEBI" id="CHEBI:15378"/>
        <dbReference type="ChEBI" id="CHEBI:57966"/>
    </reaction>
    <physiologicalReaction direction="right-to-left" evidence="2">
        <dbReference type="Rhea" id="RHEA:29461"/>
    </physiologicalReaction>
</comment>
<comment type="catalytic activity">
    <reaction evidence="13">
        <text>L-alanine(in) + H(+)(in) = L-alanine(out) + H(+)(out)</text>
        <dbReference type="Rhea" id="RHEA:29443"/>
        <dbReference type="ChEBI" id="CHEBI:15378"/>
        <dbReference type="ChEBI" id="CHEBI:57972"/>
    </reaction>
    <physiologicalReaction direction="right-to-left" evidence="13">
        <dbReference type="Rhea" id="RHEA:29445"/>
    </physiologicalReaction>
</comment>
<comment type="catalytic activity">
    <reaction evidence="12">
        <text>D-cycloserine(in) + H(+)(in) = D-cycloserine(out) + H(+)(out)</text>
        <dbReference type="Rhea" id="RHEA:70703"/>
        <dbReference type="ChEBI" id="CHEBI:15378"/>
        <dbReference type="ChEBI" id="CHEBI:75929"/>
    </reaction>
    <physiologicalReaction direction="right-to-left" evidence="12">
        <dbReference type="Rhea" id="RHEA:70705"/>
    </physiologicalReaction>
</comment>
<comment type="activity regulation">
    <text evidence="2">Beta-alanine uptake is inhibited by carbonyl cyanide m-chlorophenylhydrazone (CCCP), which dissipates the proton motive force.</text>
</comment>
<comment type="biophysicochemical properties">
    <kinetics>
        <KM evidence="2">2.4 mM for beta-alanine</KM>
        <Vmax evidence="2">46.0 nmol/min/mg enzyme</Vmax>
    </kinetics>
</comment>
<comment type="subcellular location">
    <subcellularLocation>
        <location evidence="3">Cell inner membrane</location>
        <topology evidence="1">Multi-pass membrane protein</topology>
    </subcellularLocation>
</comment>
<comment type="induction">
    <text evidence="4">In complex media, expression is negatively regulated by Hfq and the small non-translated RNA GcvB (PubMed:19118351). Hfq is required for the GcvB effect (PubMed:19118351).</text>
</comment>
<comment type="disruption phenotype">
    <text evidence="5">Mutant exhibits increased resistance to D-cycloserine when grown in a minimal medium, but no change in D-cycloserine sensitivity compared to its parental strain when grown in a complex medium.</text>
</comment>
<comment type="similarity">
    <text evidence="11">Belongs to the amino acid-polyamine-organocation (APC) superfamily. Amino acid transporter (AAT) (TC 2.A.3.1) family.</text>
</comment>
<proteinExistence type="evidence at protein level"/>
<evidence type="ECO:0000255" key="1"/>
<evidence type="ECO:0000269" key="2">
    <source>
    </source>
</evidence>
<evidence type="ECO:0000269" key="3">
    <source>
    </source>
</evidence>
<evidence type="ECO:0000269" key="4">
    <source>
    </source>
</evidence>
<evidence type="ECO:0000269" key="5">
    <source>
    </source>
</evidence>
<evidence type="ECO:0000269" key="6">
    <source>
    </source>
</evidence>
<evidence type="ECO:0000269" key="7">
    <source>
    </source>
</evidence>
<evidence type="ECO:0000269" key="8">
    <source>
    </source>
</evidence>
<evidence type="ECO:0000303" key="9">
    <source>
    </source>
</evidence>
<evidence type="ECO:0000303" key="10">
    <source>
    </source>
</evidence>
<evidence type="ECO:0000305" key="11"/>
<evidence type="ECO:0000305" key="12">
    <source>
    </source>
</evidence>
<evidence type="ECO:0000305" key="13">
    <source>
    </source>
</evidence>
<feature type="chain" id="PRO_0000054199" description="D-serine/D-alanine/glycine transporter">
    <location>
        <begin position="1"/>
        <end position="470"/>
    </location>
</feature>
<feature type="topological domain" description="Cytoplasmic" evidence="11">
    <location>
        <begin position="1"/>
        <end position="29"/>
    </location>
</feature>
<feature type="transmembrane region" description="Helical" evidence="1">
    <location>
        <begin position="30"/>
        <end position="50"/>
    </location>
</feature>
<feature type="transmembrane region" description="Helical" evidence="1">
    <location>
        <begin position="51"/>
        <end position="71"/>
    </location>
</feature>
<feature type="topological domain" description="Cytoplasmic" evidence="11">
    <location>
        <begin position="72"/>
        <end position="101"/>
    </location>
</feature>
<feature type="transmembrane region" description="Helical" evidence="1">
    <location>
        <begin position="102"/>
        <end position="122"/>
    </location>
</feature>
<feature type="topological domain" description="Periplasmic" evidence="11">
    <location>
        <begin position="123"/>
        <end position="136"/>
    </location>
</feature>
<feature type="transmembrane region" description="Helical" evidence="1">
    <location>
        <begin position="137"/>
        <end position="157"/>
    </location>
</feature>
<feature type="topological domain" description="Cytoplasmic" evidence="11">
    <location>
        <begin position="158"/>
        <end position="161"/>
    </location>
</feature>
<feature type="transmembrane region" description="Helical" evidence="1">
    <location>
        <begin position="162"/>
        <end position="182"/>
    </location>
</feature>
<feature type="topological domain" description="Periplasmic" evidence="11">
    <location>
        <begin position="183"/>
        <end position="210"/>
    </location>
</feature>
<feature type="transmembrane region" description="Helical" evidence="1">
    <location>
        <begin position="211"/>
        <end position="231"/>
    </location>
</feature>
<feature type="topological domain" description="Cytoplasmic" evidence="11">
    <location>
        <begin position="232"/>
        <end position="255"/>
    </location>
</feature>
<feature type="transmembrane region" description="Helical" evidence="1">
    <location>
        <begin position="256"/>
        <end position="276"/>
    </location>
</feature>
<feature type="topological domain" description="Periplasmic" evidence="11">
    <location>
        <begin position="277"/>
        <end position="282"/>
    </location>
</feature>
<feature type="transmembrane region" description="Helical" evidence="1">
    <location>
        <begin position="283"/>
        <end position="303"/>
    </location>
</feature>
<feature type="topological domain" description="Cytoplasmic" evidence="11">
    <location>
        <begin position="304"/>
        <end position="349"/>
    </location>
</feature>
<feature type="transmembrane region" description="Helical" evidence="1">
    <location>
        <begin position="350"/>
        <end position="370"/>
    </location>
</feature>
<feature type="transmembrane region" description="Helical" evidence="1">
    <location>
        <begin position="371"/>
        <end position="391"/>
    </location>
</feature>
<feature type="topological domain" description="Cytoplasmic" evidence="11">
    <location>
        <begin position="392"/>
        <end position="412"/>
    </location>
</feature>
<feature type="transmembrane region" description="Helical" evidence="1">
    <location>
        <begin position="413"/>
        <end position="433"/>
    </location>
</feature>
<feature type="topological domain" description="Periplasmic" evidence="11">
    <location>
        <begin position="434"/>
        <end position="440"/>
    </location>
</feature>
<feature type="transmembrane region" description="Helical" evidence="1">
    <location>
        <begin position="441"/>
        <end position="461"/>
    </location>
</feature>
<feature type="topological domain" description="Cytoplasmic" evidence="3">
    <location>
        <begin position="462"/>
        <end position="470"/>
    </location>
</feature>
<dbReference type="EMBL" id="U14003">
    <property type="protein sequence ID" value="AAA97104.1"/>
    <property type="molecule type" value="Genomic_DNA"/>
</dbReference>
<dbReference type="EMBL" id="U00096">
    <property type="protein sequence ID" value="AAC77165.1"/>
    <property type="molecule type" value="Genomic_DNA"/>
</dbReference>
<dbReference type="EMBL" id="AP009048">
    <property type="protein sequence ID" value="BAE78209.1"/>
    <property type="molecule type" value="Genomic_DNA"/>
</dbReference>
<dbReference type="PIR" id="S56433">
    <property type="entry name" value="S56433"/>
</dbReference>
<dbReference type="RefSeq" id="NP_418629.1">
    <property type="nucleotide sequence ID" value="NC_000913.3"/>
</dbReference>
<dbReference type="RefSeq" id="WP_000228346.1">
    <property type="nucleotide sequence ID" value="NZ_STEB01000013.1"/>
</dbReference>
<dbReference type="SMR" id="P0AAE0"/>
<dbReference type="BioGRID" id="4262718">
    <property type="interactions" value="171"/>
</dbReference>
<dbReference type="DIP" id="DIP-9359N"/>
<dbReference type="FunCoup" id="P0AAE0">
    <property type="interactions" value="143"/>
</dbReference>
<dbReference type="IntAct" id="P0AAE0">
    <property type="interactions" value="1"/>
</dbReference>
<dbReference type="STRING" id="511145.b4208"/>
<dbReference type="TCDB" id="2.A.3.1.7">
    <property type="family name" value="the amino acid-polyamine-organocation (apc) family"/>
</dbReference>
<dbReference type="jPOST" id="P0AAE0"/>
<dbReference type="PaxDb" id="511145-b4208"/>
<dbReference type="EnsemblBacteria" id="AAC77165">
    <property type="protein sequence ID" value="AAC77165"/>
    <property type="gene ID" value="b4208"/>
</dbReference>
<dbReference type="GeneID" id="93777613"/>
<dbReference type="GeneID" id="948725"/>
<dbReference type="KEGG" id="ecj:JW4166"/>
<dbReference type="KEGG" id="eco:b4208"/>
<dbReference type="KEGG" id="ecoc:C3026_22730"/>
<dbReference type="PATRIC" id="fig|1411691.4.peg.2493"/>
<dbReference type="EchoBASE" id="EB2397"/>
<dbReference type="eggNOG" id="COG1113">
    <property type="taxonomic scope" value="Bacteria"/>
</dbReference>
<dbReference type="HOGENOM" id="CLU_007946_9_3_6"/>
<dbReference type="InParanoid" id="P0AAE0"/>
<dbReference type="OMA" id="PWRDVVP"/>
<dbReference type="OrthoDB" id="5297508at2"/>
<dbReference type="PhylomeDB" id="P0AAE0"/>
<dbReference type="BioCyc" id="EcoCyc:CYCA-MONOMER"/>
<dbReference type="BioCyc" id="MetaCyc:CYCA-MONOMER"/>
<dbReference type="PRO" id="PR:P0AAE0"/>
<dbReference type="Proteomes" id="UP000000625">
    <property type="component" value="Chromosome"/>
</dbReference>
<dbReference type="GO" id="GO:0005886">
    <property type="term" value="C:plasma membrane"/>
    <property type="evidence" value="ECO:0000314"/>
    <property type="project" value="EcoCyc"/>
</dbReference>
<dbReference type="GO" id="GO:0001761">
    <property type="term" value="F:beta-alanine transmembrane transporter activity"/>
    <property type="evidence" value="ECO:0000315"/>
    <property type="project" value="EcoCyc"/>
</dbReference>
<dbReference type="GO" id="GO:0042944">
    <property type="term" value="F:D-alanine transmembrane transporter activity"/>
    <property type="evidence" value="ECO:0000315"/>
    <property type="project" value="EcoCyc"/>
</dbReference>
<dbReference type="GO" id="GO:0042945">
    <property type="term" value="F:D-serine transmembrane transporter activity"/>
    <property type="evidence" value="ECO:0000315"/>
    <property type="project" value="EcoCyc"/>
</dbReference>
<dbReference type="GO" id="GO:0015187">
    <property type="term" value="F:glycine transmembrane transporter activity"/>
    <property type="evidence" value="ECO:0000315"/>
    <property type="project" value="EcoCyc"/>
</dbReference>
<dbReference type="GO" id="GO:0015180">
    <property type="term" value="F:L-alanine transmembrane transporter activity"/>
    <property type="evidence" value="ECO:0000315"/>
    <property type="project" value="EcoCyc"/>
</dbReference>
<dbReference type="GO" id="GO:0015293">
    <property type="term" value="F:symporter activity"/>
    <property type="evidence" value="ECO:0007669"/>
    <property type="project" value="UniProtKB-KW"/>
</dbReference>
<dbReference type="GO" id="GO:0001762">
    <property type="term" value="P:beta-alanine transport"/>
    <property type="evidence" value="ECO:0000315"/>
    <property type="project" value="EcoCyc"/>
</dbReference>
<dbReference type="GO" id="GO:0042941">
    <property type="term" value="P:D-alanine transmembrane transport"/>
    <property type="evidence" value="ECO:0000315"/>
    <property type="project" value="EcoCyc"/>
</dbReference>
<dbReference type="GO" id="GO:0042942">
    <property type="term" value="P:D-serine transmembrane transport"/>
    <property type="evidence" value="ECO:0000315"/>
    <property type="project" value="EcoCyc"/>
</dbReference>
<dbReference type="GO" id="GO:0015816">
    <property type="term" value="P:glycine transport"/>
    <property type="evidence" value="ECO:0000315"/>
    <property type="project" value="EcoCyc"/>
</dbReference>
<dbReference type="GO" id="GO:0015808">
    <property type="term" value="P:L-alanine transport"/>
    <property type="evidence" value="ECO:0000315"/>
    <property type="project" value="EcoCyc"/>
</dbReference>
<dbReference type="FunFam" id="1.20.1740.10:FF:000001">
    <property type="entry name" value="Amino acid permease"/>
    <property type="match status" value="1"/>
</dbReference>
<dbReference type="Gene3D" id="1.20.1740.10">
    <property type="entry name" value="Amino acid/polyamine transporter I"/>
    <property type="match status" value="1"/>
</dbReference>
<dbReference type="InterPro" id="IPR004841">
    <property type="entry name" value="AA-permease/SLC12A_dom"/>
</dbReference>
<dbReference type="InterPro" id="IPR004840">
    <property type="entry name" value="Amino_acid_permease_CS"/>
</dbReference>
<dbReference type="NCBIfam" id="NF008272">
    <property type="entry name" value="PRK11049.1"/>
    <property type="match status" value="1"/>
</dbReference>
<dbReference type="PANTHER" id="PTHR43495:SF2">
    <property type="entry name" value="D-SERINE_D-ALANINE_GLYCINE TRANSPORTER"/>
    <property type="match status" value="1"/>
</dbReference>
<dbReference type="PANTHER" id="PTHR43495">
    <property type="entry name" value="GABA PERMEASE"/>
    <property type="match status" value="1"/>
</dbReference>
<dbReference type="Pfam" id="PF00324">
    <property type="entry name" value="AA_permease"/>
    <property type="match status" value="1"/>
</dbReference>
<dbReference type="PIRSF" id="PIRSF006060">
    <property type="entry name" value="AA_transporter"/>
    <property type="match status" value="1"/>
</dbReference>
<dbReference type="PROSITE" id="PS00218">
    <property type="entry name" value="AMINO_ACID_PERMEASE_1"/>
    <property type="match status" value="1"/>
</dbReference>
<sequence length="470" mass="51660">MVDQVKVVADDQAPAEQSLRRNLTNRHIQLIAIGGAIGTGLFMGSGKTISLAGPSIIFVYMIIGFMLFFVMRAMGELLLSNLEYKSFSDFASDLLGPWAGYFTGWTYWFCWVVTGMADVVAITAYAQFWFPDLSDWVASLAVIVLLLTLNLATVKMFGEMEFWFAMIKIVAIVSLIVVGLVMVAMHFQSPTGVEASFAHLWNDGGWFPKGLSGFFAGFQIAVFAFVGIELVGTTAAETKDPEKSLPRAINSIPIRIIMFYVFALIVIMSVTPWSSVVPEKSPFVELFVLVGLPAAASVINFVVLTSAASSANSGVFSTSRMLFGLAQEGVAPKAFAKLSKRAVPAKGLTFSCICLLGGVVMLYVNPSVIGAFTMITTVSAILFMFVWTIILCSYLVYRKQRPHLHEKSIYKMPLGKLMCWVCMAFFVFVVVLLTLEDDTRQALLVTPLWFIALGLGWLFIGKKRAAELRK</sequence>
<keyword id="KW-0029">Amino-acid transport</keyword>
<keyword id="KW-0997">Cell inner membrane</keyword>
<keyword id="KW-1003">Cell membrane</keyword>
<keyword id="KW-0472">Membrane</keyword>
<keyword id="KW-1185">Reference proteome</keyword>
<keyword id="KW-0769">Symport</keyword>
<keyword id="KW-0812">Transmembrane</keyword>
<keyword id="KW-1133">Transmembrane helix</keyword>
<keyword id="KW-0813">Transport</keyword>
<name>CYCA_ECOLI</name>